<sequence length="58" mass="6478">MATVKVTLVKSLNGRLANHKACVKGLGLRRINHTVEVQDTPENRGMINKAYYLLRVEG</sequence>
<reference key="1">
    <citation type="journal article" date="2000" name="Nature">
        <title>Complete genome sequence of Pseudomonas aeruginosa PAO1, an opportunistic pathogen.</title>
        <authorList>
            <person name="Stover C.K."/>
            <person name="Pham X.-Q.T."/>
            <person name="Erwin A.L."/>
            <person name="Mizoguchi S.D."/>
            <person name="Warrener P."/>
            <person name="Hickey M.J."/>
            <person name="Brinkman F.S.L."/>
            <person name="Hufnagle W.O."/>
            <person name="Kowalik D.J."/>
            <person name="Lagrou M."/>
            <person name="Garber R.L."/>
            <person name="Goltry L."/>
            <person name="Tolentino E."/>
            <person name="Westbrock-Wadman S."/>
            <person name="Yuan Y."/>
            <person name="Brody L.L."/>
            <person name="Coulter S.N."/>
            <person name="Folger K.R."/>
            <person name="Kas A."/>
            <person name="Larbig K."/>
            <person name="Lim R.M."/>
            <person name="Smith K.A."/>
            <person name="Spencer D.H."/>
            <person name="Wong G.K.-S."/>
            <person name="Wu Z."/>
            <person name="Paulsen I.T."/>
            <person name="Reizer J."/>
            <person name="Saier M.H. Jr."/>
            <person name="Hancock R.E.W."/>
            <person name="Lory S."/>
            <person name="Olson M.V."/>
        </authorList>
    </citation>
    <scope>NUCLEOTIDE SEQUENCE [LARGE SCALE GENOMIC DNA]</scope>
    <source>
        <strain>ATCC 15692 / DSM 22644 / CIP 104116 / JCM 14847 / LMG 12228 / 1C / PRS 101 / PAO1</strain>
    </source>
</reference>
<reference key="2">
    <citation type="journal article" date="1995" name="Int. J. Syst. Bacteriol.">
        <title>Comparative ribosomal protein sequence analyses of a phylogenetically defined genus, Pseudomonas, and its relatives.</title>
        <authorList>
            <person name="Ochi K."/>
        </authorList>
    </citation>
    <scope>PROTEIN SEQUENCE OF 2-26</scope>
    <source>
        <strain>ATCC 10145 / DSM 50071 / JCM 5962 / LMG 1242 / NBRC 12689 / NCIMB 8295 / NRRL B-771</strain>
    </source>
</reference>
<proteinExistence type="evidence at protein level"/>
<evidence type="ECO:0000255" key="1">
    <source>
        <dbReference type="HAMAP-Rule" id="MF_01371"/>
    </source>
</evidence>
<evidence type="ECO:0000269" key="2">
    <source>
    </source>
</evidence>
<evidence type="ECO:0000305" key="3"/>
<protein>
    <recommendedName>
        <fullName evidence="1">Large ribosomal subunit protein uL30</fullName>
    </recommendedName>
    <alternativeName>
        <fullName evidence="3">50S ribosomal protein L30</fullName>
    </alternativeName>
</protein>
<name>RL30_PSEAE</name>
<comment type="subunit">
    <text evidence="1">Part of the 50S ribosomal subunit.</text>
</comment>
<comment type="similarity">
    <text evidence="1">Belongs to the universal ribosomal protein uL30 family.</text>
</comment>
<keyword id="KW-0002">3D-structure</keyword>
<keyword id="KW-0903">Direct protein sequencing</keyword>
<keyword id="KW-1185">Reference proteome</keyword>
<keyword id="KW-0687">Ribonucleoprotein</keyword>
<keyword id="KW-0689">Ribosomal protein</keyword>
<dbReference type="EMBL" id="AE004091">
    <property type="protein sequence ID" value="AAG07633.1"/>
    <property type="molecule type" value="Genomic_DNA"/>
</dbReference>
<dbReference type="PIR" id="C83114">
    <property type="entry name" value="C83114"/>
</dbReference>
<dbReference type="RefSeq" id="NP_252935.1">
    <property type="nucleotide sequence ID" value="NC_002516.2"/>
</dbReference>
<dbReference type="RefSeq" id="WP_003093696.1">
    <property type="nucleotide sequence ID" value="NZ_QZGE01000028.1"/>
</dbReference>
<dbReference type="PDB" id="7UNR">
    <property type="method" value="EM"/>
    <property type="resolution" value="2.90 A"/>
    <property type="chains" value="2=1-58"/>
</dbReference>
<dbReference type="PDB" id="7UNU">
    <property type="method" value="EM"/>
    <property type="resolution" value="2.90 A"/>
    <property type="chains" value="2=1-58"/>
</dbReference>
<dbReference type="PDB" id="7UNV">
    <property type="method" value="EM"/>
    <property type="resolution" value="2.70 A"/>
    <property type="chains" value="2=1-58"/>
</dbReference>
<dbReference type="PDB" id="7UNW">
    <property type="method" value="EM"/>
    <property type="resolution" value="2.60 A"/>
    <property type="chains" value="2=1-58"/>
</dbReference>
<dbReference type="PDB" id="8CD1">
    <property type="method" value="EM"/>
    <property type="resolution" value="3.00 A"/>
    <property type="chains" value="Z=1-58"/>
</dbReference>
<dbReference type="PDB" id="8RWG">
    <property type="method" value="EM"/>
    <property type="resolution" value="2.46 A"/>
    <property type="chains" value="4=1-58"/>
</dbReference>
<dbReference type="PDBsum" id="7UNR"/>
<dbReference type="PDBsum" id="7UNU"/>
<dbReference type="PDBsum" id="7UNV"/>
<dbReference type="PDBsum" id="7UNW"/>
<dbReference type="PDBsum" id="8CD1"/>
<dbReference type="PDBsum" id="8RWG"/>
<dbReference type="EMDB" id="EMD-16566"/>
<dbReference type="EMDB" id="EMD-19547"/>
<dbReference type="EMDB" id="EMD-26630"/>
<dbReference type="EMDB" id="EMD-26633"/>
<dbReference type="EMDB" id="EMD-26634"/>
<dbReference type="EMDB" id="EMD-26635"/>
<dbReference type="SMR" id="Q9HWF3"/>
<dbReference type="FunCoup" id="Q9HWF3">
    <property type="interactions" value="487"/>
</dbReference>
<dbReference type="STRING" id="208964.PA4245"/>
<dbReference type="PaxDb" id="208964-PA4245"/>
<dbReference type="DNASU" id="881787"/>
<dbReference type="GeneID" id="77219216"/>
<dbReference type="GeneID" id="881787"/>
<dbReference type="KEGG" id="pae:PA4245"/>
<dbReference type="PATRIC" id="fig|208964.12.peg.4446"/>
<dbReference type="PseudoCAP" id="PA4245"/>
<dbReference type="HOGENOM" id="CLU_131047_1_4_6"/>
<dbReference type="InParanoid" id="Q9HWF3"/>
<dbReference type="OrthoDB" id="9812790at2"/>
<dbReference type="PhylomeDB" id="Q9HWF3"/>
<dbReference type="BioCyc" id="PAER208964:G1FZ6-4318-MONOMER"/>
<dbReference type="PRO" id="PR:Q9HWF3"/>
<dbReference type="Proteomes" id="UP000002438">
    <property type="component" value="Chromosome"/>
</dbReference>
<dbReference type="GO" id="GO:0022625">
    <property type="term" value="C:cytosolic large ribosomal subunit"/>
    <property type="evidence" value="ECO:0000318"/>
    <property type="project" value="GO_Central"/>
</dbReference>
<dbReference type="GO" id="GO:0003735">
    <property type="term" value="F:structural constituent of ribosome"/>
    <property type="evidence" value="ECO:0007669"/>
    <property type="project" value="InterPro"/>
</dbReference>
<dbReference type="GO" id="GO:0006412">
    <property type="term" value="P:translation"/>
    <property type="evidence" value="ECO:0007669"/>
    <property type="project" value="UniProtKB-UniRule"/>
</dbReference>
<dbReference type="CDD" id="cd01658">
    <property type="entry name" value="Ribosomal_L30"/>
    <property type="match status" value="1"/>
</dbReference>
<dbReference type="FunFam" id="3.30.1390.20:FF:000001">
    <property type="entry name" value="50S ribosomal protein L30"/>
    <property type="match status" value="1"/>
</dbReference>
<dbReference type="Gene3D" id="3.30.1390.20">
    <property type="entry name" value="Ribosomal protein L30, ferredoxin-like fold domain"/>
    <property type="match status" value="1"/>
</dbReference>
<dbReference type="HAMAP" id="MF_01371_B">
    <property type="entry name" value="Ribosomal_uL30_B"/>
    <property type="match status" value="1"/>
</dbReference>
<dbReference type="InterPro" id="IPR036919">
    <property type="entry name" value="Ribo_uL30_ferredoxin-like_sf"/>
</dbReference>
<dbReference type="InterPro" id="IPR005996">
    <property type="entry name" value="Ribosomal_uL30_bac-type"/>
</dbReference>
<dbReference type="InterPro" id="IPR016082">
    <property type="entry name" value="Ribosomal_uL30_ferredoxin-like"/>
</dbReference>
<dbReference type="NCBIfam" id="TIGR01308">
    <property type="entry name" value="rpmD_bact"/>
    <property type="match status" value="1"/>
</dbReference>
<dbReference type="PANTHER" id="PTHR15892:SF2">
    <property type="entry name" value="LARGE RIBOSOMAL SUBUNIT PROTEIN UL30M"/>
    <property type="match status" value="1"/>
</dbReference>
<dbReference type="PANTHER" id="PTHR15892">
    <property type="entry name" value="MITOCHONDRIAL RIBOSOMAL PROTEIN L30"/>
    <property type="match status" value="1"/>
</dbReference>
<dbReference type="Pfam" id="PF00327">
    <property type="entry name" value="Ribosomal_L30"/>
    <property type="match status" value="1"/>
</dbReference>
<dbReference type="PIRSF" id="PIRSF002211">
    <property type="entry name" value="Ribosomal_L30_bac-type"/>
    <property type="match status" value="1"/>
</dbReference>
<dbReference type="SUPFAM" id="SSF55129">
    <property type="entry name" value="Ribosomal protein L30p/L7e"/>
    <property type="match status" value="1"/>
</dbReference>
<accession>Q9HWF3</accession>
<accession>Q9R4Q4</accession>
<organism>
    <name type="scientific">Pseudomonas aeruginosa (strain ATCC 15692 / DSM 22644 / CIP 104116 / JCM 14847 / LMG 12228 / 1C / PRS 101 / PAO1)</name>
    <dbReference type="NCBI Taxonomy" id="208964"/>
    <lineage>
        <taxon>Bacteria</taxon>
        <taxon>Pseudomonadati</taxon>
        <taxon>Pseudomonadota</taxon>
        <taxon>Gammaproteobacteria</taxon>
        <taxon>Pseudomonadales</taxon>
        <taxon>Pseudomonadaceae</taxon>
        <taxon>Pseudomonas</taxon>
    </lineage>
</organism>
<gene>
    <name evidence="1" type="primary">rpmD</name>
    <name type="ordered locus">PA4245</name>
</gene>
<feature type="initiator methionine" description="Removed" evidence="2">
    <location>
        <position position="1"/>
    </location>
</feature>
<feature type="chain" id="PRO_0000224005" description="Large ribosomal subunit protein uL30">
    <location>
        <begin position="2"/>
        <end position="58"/>
    </location>
</feature>